<name>SYG_STAAS</name>
<feature type="chain" id="PRO_0000072976" description="Glycine--tRNA ligase">
    <location>
        <begin position="1"/>
        <end position="463"/>
    </location>
</feature>
<feature type="binding site" evidence="1">
    <location>
        <position position="98"/>
    </location>
    <ligand>
        <name>substrate</name>
    </ligand>
</feature>
<feature type="binding site" evidence="1">
    <location>
        <position position="174"/>
    </location>
    <ligand>
        <name>substrate</name>
    </ligand>
</feature>
<feature type="binding site" evidence="1">
    <location>
        <begin position="206"/>
        <end position="208"/>
    </location>
    <ligand>
        <name>ATP</name>
        <dbReference type="ChEBI" id="CHEBI:30616"/>
    </ligand>
</feature>
<feature type="binding site" evidence="1">
    <location>
        <begin position="216"/>
        <end position="221"/>
    </location>
    <ligand>
        <name>ATP</name>
        <dbReference type="ChEBI" id="CHEBI:30616"/>
    </ligand>
</feature>
<feature type="binding site" evidence="1">
    <location>
        <begin position="221"/>
        <end position="225"/>
    </location>
    <ligand>
        <name>substrate</name>
    </ligand>
</feature>
<feature type="binding site" evidence="1">
    <location>
        <begin position="290"/>
        <end position="291"/>
    </location>
    <ligand>
        <name>ATP</name>
        <dbReference type="ChEBI" id="CHEBI:30616"/>
    </ligand>
</feature>
<feature type="binding site" evidence="1">
    <location>
        <begin position="330"/>
        <end position="334"/>
    </location>
    <ligand>
        <name>substrate</name>
    </ligand>
</feature>
<feature type="binding site" evidence="1">
    <location>
        <begin position="334"/>
        <end position="337"/>
    </location>
    <ligand>
        <name>ATP</name>
        <dbReference type="ChEBI" id="CHEBI:30616"/>
    </ligand>
</feature>
<keyword id="KW-0030">Aminoacyl-tRNA synthetase</keyword>
<keyword id="KW-0067">ATP-binding</keyword>
<keyword id="KW-0963">Cytoplasm</keyword>
<keyword id="KW-0436">Ligase</keyword>
<keyword id="KW-0547">Nucleotide-binding</keyword>
<keyword id="KW-0648">Protein biosynthesis</keyword>
<dbReference type="EC" id="6.1.1.14" evidence="1"/>
<dbReference type="EMBL" id="BX571857">
    <property type="protein sequence ID" value="CAG43304.1"/>
    <property type="molecule type" value="Genomic_DNA"/>
</dbReference>
<dbReference type="RefSeq" id="WP_001030080.1">
    <property type="nucleotide sequence ID" value="NC_002953.3"/>
</dbReference>
<dbReference type="SMR" id="Q6G902"/>
<dbReference type="KEGG" id="sas:SAS1503"/>
<dbReference type="HOGENOM" id="CLU_015515_2_1_9"/>
<dbReference type="GO" id="GO:0005737">
    <property type="term" value="C:cytoplasm"/>
    <property type="evidence" value="ECO:0007669"/>
    <property type="project" value="UniProtKB-SubCell"/>
</dbReference>
<dbReference type="GO" id="GO:0005524">
    <property type="term" value="F:ATP binding"/>
    <property type="evidence" value="ECO:0007669"/>
    <property type="project" value="UniProtKB-UniRule"/>
</dbReference>
<dbReference type="GO" id="GO:0140096">
    <property type="term" value="F:catalytic activity, acting on a protein"/>
    <property type="evidence" value="ECO:0007669"/>
    <property type="project" value="UniProtKB-ARBA"/>
</dbReference>
<dbReference type="GO" id="GO:0004820">
    <property type="term" value="F:glycine-tRNA ligase activity"/>
    <property type="evidence" value="ECO:0000250"/>
    <property type="project" value="UniProtKB"/>
</dbReference>
<dbReference type="GO" id="GO:0046983">
    <property type="term" value="F:protein dimerization activity"/>
    <property type="evidence" value="ECO:0000250"/>
    <property type="project" value="UniProtKB"/>
</dbReference>
<dbReference type="GO" id="GO:0016740">
    <property type="term" value="F:transferase activity"/>
    <property type="evidence" value="ECO:0007669"/>
    <property type="project" value="UniProtKB-ARBA"/>
</dbReference>
<dbReference type="GO" id="GO:0006426">
    <property type="term" value="P:glycyl-tRNA aminoacylation"/>
    <property type="evidence" value="ECO:0007669"/>
    <property type="project" value="UniProtKB-UniRule"/>
</dbReference>
<dbReference type="CDD" id="cd00774">
    <property type="entry name" value="GlyRS-like_core"/>
    <property type="match status" value="1"/>
</dbReference>
<dbReference type="CDD" id="cd00858">
    <property type="entry name" value="GlyRS_anticodon"/>
    <property type="match status" value="1"/>
</dbReference>
<dbReference type="FunFam" id="3.40.50.800:FF:000002">
    <property type="entry name" value="Glycine--tRNA ligase"/>
    <property type="match status" value="1"/>
</dbReference>
<dbReference type="Gene3D" id="3.30.40.230">
    <property type="match status" value="1"/>
</dbReference>
<dbReference type="Gene3D" id="3.40.50.800">
    <property type="entry name" value="Anticodon-binding domain"/>
    <property type="match status" value="1"/>
</dbReference>
<dbReference type="Gene3D" id="3.30.930.10">
    <property type="entry name" value="Bira Bifunctional Protein, Domain 2"/>
    <property type="match status" value="1"/>
</dbReference>
<dbReference type="HAMAP" id="MF_00253_B">
    <property type="entry name" value="Gly_tRNA_synth_B"/>
    <property type="match status" value="1"/>
</dbReference>
<dbReference type="InterPro" id="IPR002314">
    <property type="entry name" value="aa-tRNA-synt_IIb"/>
</dbReference>
<dbReference type="InterPro" id="IPR006195">
    <property type="entry name" value="aa-tRNA-synth_II"/>
</dbReference>
<dbReference type="InterPro" id="IPR045864">
    <property type="entry name" value="aa-tRNA-synth_II/BPL/LPL"/>
</dbReference>
<dbReference type="InterPro" id="IPR004154">
    <property type="entry name" value="Anticodon-bd"/>
</dbReference>
<dbReference type="InterPro" id="IPR036621">
    <property type="entry name" value="Anticodon-bd_dom_sf"/>
</dbReference>
<dbReference type="InterPro" id="IPR027031">
    <property type="entry name" value="Gly-tRNA_synthase/POLG2"/>
</dbReference>
<dbReference type="InterPro" id="IPR022961">
    <property type="entry name" value="Gly_tRNA_ligase_bac"/>
</dbReference>
<dbReference type="InterPro" id="IPR033731">
    <property type="entry name" value="GlyRS-like_core"/>
</dbReference>
<dbReference type="InterPro" id="IPR002315">
    <property type="entry name" value="tRNA-synt_gly"/>
</dbReference>
<dbReference type="NCBIfam" id="TIGR00389">
    <property type="entry name" value="glyS_dimeric"/>
    <property type="match status" value="1"/>
</dbReference>
<dbReference type="NCBIfam" id="NF003211">
    <property type="entry name" value="PRK04173.1"/>
    <property type="match status" value="1"/>
</dbReference>
<dbReference type="PANTHER" id="PTHR10745:SF8">
    <property type="entry name" value="DNA POLYMERASE SUBUNIT GAMMA-2, MITOCHONDRIAL"/>
    <property type="match status" value="1"/>
</dbReference>
<dbReference type="PANTHER" id="PTHR10745">
    <property type="entry name" value="GLYCYL-TRNA SYNTHETASE/DNA POLYMERASE SUBUNIT GAMMA-2"/>
    <property type="match status" value="1"/>
</dbReference>
<dbReference type="Pfam" id="PF03129">
    <property type="entry name" value="HGTP_anticodon"/>
    <property type="match status" value="1"/>
</dbReference>
<dbReference type="Pfam" id="PF00587">
    <property type="entry name" value="tRNA-synt_2b"/>
    <property type="match status" value="1"/>
</dbReference>
<dbReference type="PRINTS" id="PR01043">
    <property type="entry name" value="TRNASYNTHGLY"/>
</dbReference>
<dbReference type="SUPFAM" id="SSF52954">
    <property type="entry name" value="Class II aaRS ABD-related"/>
    <property type="match status" value="1"/>
</dbReference>
<dbReference type="SUPFAM" id="SSF55681">
    <property type="entry name" value="Class II aaRS and biotin synthetases"/>
    <property type="match status" value="1"/>
</dbReference>
<dbReference type="PROSITE" id="PS50862">
    <property type="entry name" value="AA_TRNA_LIGASE_II"/>
    <property type="match status" value="1"/>
</dbReference>
<sequence>MAKDMDTIVSLAKHRGFVFPGSDIYGGLSNTWDYGPLGVELKNNVKKAWWQKFITQSPFNVGIDAAILMNPKVWEASGHLNNFNDPMIDNKDSKIRYRADKLIEDYMQDVKGDENFIADGLSFEQMKKIIDDEGIVCPVSKTANWTEIRQFNLMFKTFQGVTEDSTNEIFLRPETAQGIFVNYKNVQRSMRKKLPFGIGQIGKSFRNEITPGNFIFRTREFEQMELEFFCKPGEEIEWQNYWKTFASDWLTSLNMSSENMRLRDHDEDELSHYSNATTDIEYKFPFGWGELWGIASRTDFDLRKHAEHSGEDFRYHDPETNEKYIPYCIEPSLGADRVTLAFLCDAYDEEGVEGSKDARTVLHFHPALAPYKAAILPLSKKLSGEAIKIFEQLSSKFSIDFDESQSIGKRYRRQDEIGTPYCVTFDFDSLEDNQVTVRDRDSMEQVRMPISELEAFLTEKTKF</sequence>
<accession>Q6G902</accession>
<gene>
    <name evidence="1" type="primary">glyQS</name>
    <name type="ordered locus">SAS1503</name>
</gene>
<proteinExistence type="inferred from homology"/>
<comment type="function">
    <text evidence="1">Catalyzes the attachment of glycine to tRNA(Gly).</text>
</comment>
<comment type="catalytic activity">
    <reaction evidence="1">
        <text>tRNA(Gly) + glycine + ATP = glycyl-tRNA(Gly) + AMP + diphosphate</text>
        <dbReference type="Rhea" id="RHEA:16013"/>
        <dbReference type="Rhea" id="RHEA-COMP:9664"/>
        <dbReference type="Rhea" id="RHEA-COMP:9683"/>
        <dbReference type="ChEBI" id="CHEBI:30616"/>
        <dbReference type="ChEBI" id="CHEBI:33019"/>
        <dbReference type="ChEBI" id="CHEBI:57305"/>
        <dbReference type="ChEBI" id="CHEBI:78442"/>
        <dbReference type="ChEBI" id="CHEBI:78522"/>
        <dbReference type="ChEBI" id="CHEBI:456215"/>
        <dbReference type="EC" id="6.1.1.14"/>
    </reaction>
</comment>
<comment type="subunit">
    <text evidence="1">Homodimer.</text>
</comment>
<comment type="subcellular location">
    <subcellularLocation>
        <location evidence="1">Cytoplasm</location>
    </subcellularLocation>
</comment>
<comment type="similarity">
    <text evidence="1">Belongs to the class-II aminoacyl-tRNA synthetase family.</text>
</comment>
<reference key="1">
    <citation type="journal article" date="2004" name="Proc. Natl. Acad. Sci. U.S.A.">
        <title>Complete genomes of two clinical Staphylococcus aureus strains: evidence for the rapid evolution of virulence and drug resistance.</title>
        <authorList>
            <person name="Holden M.T.G."/>
            <person name="Feil E.J."/>
            <person name="Lindsay J.A."/>
            <person name="Peacock S.J."/>
            <person name="Day N.P.J."/>
            <person name="Enright M.C."/>
            <person name="Foster T.J."/>
            <person name="Moore C.E."/>
            <person name="Hurst L."/>
            <person name="Atkin R."/>
            <person name="Barron A."/>
            <person name="Bason N."/>
            <person name="Bentley S.D."/>
            <person name="Chillingworth C."/>
            <person name="Chillingworth T."/>
            <person name="Churcher C."/>
            <person name="Clark L."/>
            <person name="Corton C."/>
            <person name="Cronin A."/>
            <person name="Doggett J."/>
            <person name="Dowd L."/>
            <person name="Feltwell T."/>
            <person name="Hance Z."/>
            <person name="Harris B."/>
            <person name="Hauser H."/>
            <person name="Holroyd S."/>
            <person name="Jagels K."/>
            <person name="James K.D."/>
            <person name="Lennard N."/>
            <person name="Line A."/>
            <person name="Mayes R."/>
            <person name="Moule S."/>
            <person name="Mungall K."/>
            <person name="Ormond D."/>
            <person name="Quail M.A."/>
            <person name="Rabbinowitsch E."/>
            <person name="Rutherford K.M."/>
            <person name="Sanders M."/>
            <person name="Sharp S."/>
            <person name="Simmonds M."/>
            <person name="Stevens K."/>
            <person name="Whitehead S."/>
            <person name="Barrell B.G."/>
            <person name="Spratt B.G."/>
            <person name="Parkhill J."/>
        </authorList>
    </citation>
    <scope>NUCLEOTIDE SEQUENCE [LARGE SCALE GENOMIC DNA]</scope>
    <source>
        <strain>MSSA476</strain>
    </source>
</reference>
<protein>
    <recommendedName>
        <fullName evidence="1">Glycine--tRNA ligase</fullName>
        <ecNumber evidence="1">6.1.1.14</ecNumber>
    </recommendedName>
    <alternativeName>
        <fullName evidence="1">Glycyl-tRNA synthetase</fullName>
        <shortName evidence="1">GlyRS</shortName>
    </alternativeName>
</protein>
<organism>
    <name type="scientific">Staphylococcus aureus (strain MSSA476)</name>
    <dbReference type="NCBI Taxonomy" id="282459"/>
    <lineage>
        <taxon>Bacteria</taxon>
        <taxon>Bacillati</taxon>
        <taxon>Bacillota</taxon>
        <taxon>Bacilli</taxon>
        <taxon>Bacillales</taxon>
        <taxon>Staphylococcaceae</taxon>
        <taxon>Staphylococcus</taxon>
    </lineage>
</organism>
<evidence type="ECO:0000255" key="1">
    <source>
        <dbReference type="HAMAP-Rule" id="MF_00253"/>
    </source>
</evidence>